<evidence type="ECO:0000255" key="1">
    <source>
        <dbReference type="HAMAP-Rule" id="MF_01642"/>
    </source>
</evidence>
<organism>
    <name type="scientific">Nostoc sp. (strain PCC 7120 / SAG 25.82 / UTEX 2576)</name>
    <dbReference type="NCBI Taxonomy" id="103690"/>
    <lineage>
        <taxon>Bacteria</taxon>
        <taxon>Bacillati</taxon>
        <taxon>Cyanobacteriota</taxon>
        <taxon>Cyanophyceae</taxon>
        <taxon>Nostocales</taxon>
        <taxon>Nostocaceae</taxon>
        <taxon>Nostoc</taxon>
    </lineage>
</organism>
<name>DAPT1_NOSS1</name>
<accession>Q8YM38</accession>
<keyword id="KW-0032">Aminotransferase</keyword>
<keyword id="KW-0663">Pyridoxal phosphate</keyword>
<keyword id="KW-1185">Reference proteome</keyword>
<keyword id="KW-0808">Transferase</keyword>
<comment type="function">
    <text evidence="1">Involved in the synthesis of meso-diaminopimelate (m-DAP or DL-DAP), required for both lysine and peptidoglycan biosynthesis. Catalyzes the direct conversion of tetrahydrodipicolinate to LL-diaminopimelate.</text>
</comment>
<comment type="catalytic activity">
    <reaction evidence="1">
        <text>(2S,6S)-2,6-diaminopimelate + 2-oxoglutarate = (S)-2,3,4,5-tetrahydrodipicolinate + L-glutamate + H2O + H(+)</text>
        <dbReference type="Rhea" id="RHEA:23988"/>
        <dbReference type="ChEBI" id="CHEBI:15377"/>
        <dbReference type="ChEBI" id="CHEBI:15378"/>
        <dbReference type="ChEBI" id="CHEBI:16810"/>
        <dbReference type="ChEBI" id="CHEBI:16845"/>
        <dbReference type="ChEBI" id="CHEBI:29985"/>
        <dbReference type="ChEBI" id="CHEBI:57609"/>
        <dbReference type="EC" id="2.6.1.83"/>
    </reaction>
</comment>
<comment type="cofactor">
    <cofactor evidence="1">
        <name>pyridoxal 5'-phosphate</name>
        <dbReference type="ChEBI" id="CHEBI:597326"/>
    </cofactor>
</comment>
<comment type="pathway">
    <text evidence="1">Amino-acid biosynthesis; L-lysine biosynthesis via DAP pathway; LL-2,6-diaminopimelate from (S)-tetrahydrodipicolinate (aminotransferase route): step 1/1.</text>
</comment>
<comment type="subunit">
    <text evidence="1">Homodimer.</text>
</comment>
<comment type="similarity">
    <text evidence="1">Belongs to the class-I pyridoxal-phosphate-dependent aminotransferase family. LL-diaminopimelate aminotransferase subfamily.</text>
</comment>
<sequence length="411" mass="44987">MATINDNYLKLKAGYLFPEIARRVNAFAEANPDAKIIRLGIGDVTEPLPAACRSAMIQAVEEMGDRSSFKGYGPEQGYAWLREKIATQDFQARGADVDAAEIFISDGSKCDTGNILDIFGDNNIIAVTDPVYPVYVDTNVMAGHTGAANEKGEFEGLVYLPVTAENNFTAEIPSQKVDLIYLCFPNNPTGATATKEHLQAWVDYAKAHNSIIFFDAAYESYITDPSLPHSIYEIEGAREVAIEFRSFSKNAGFTGTRCALTVVPKTLKAKAADGSDVELWKLWNRRQSTKFNGVSYIVQRGAEAVYSEAGQAQVKALVSFYLDNAKIIREKLTAAGLSVYGGVNAPYVWVKTPNGLSSWDFFDQLLQTVNVVGTPGSGFGAAGEGYFRVSAFNSRENVEEAMKRITEKFKL</sequence>
<reference key="1">
    <citation type="journal article" date="2001" name="DNA Res.">
        <title>Complete genomic sequence of the filamentous nitrogen-fixing cyanobacterium Anabaena sp. strain PCC 7120.</title>
        <authorList>
            <person name="Kaneko T."/>
            <person name="Nakamura Y."/>
            <person name="Wolk C.P."/>
            <person name="Kuritz T."/>
            <person name="Sasamoto S."/>
            <person name="Watanabe A."/>
            <person name="Iriguchi M."/>
            <person name="Ishikawa A."/>
            <person name="Kawashima K."/>
            <person name="Kimura T."/>
            <person name="Kishida Y."/>
            <person name="Kohara M."/>
            <person name="Matsumoto M."/>
            <person name="Matsuno A."/>
            <person name="Muraki A."/>
            <person name="Nakazaki N."/>
            <person name="Shimpo S."/>
            <person name="Sugimoto M."/>
            <person name="Takazawa M."/>
            <person name="Yamada M."/>
            <person name="Yasuda M."/>
            <person name="Tabata S."/>
        </authorList>
    </citation>
    <scope>NUCLEOTIDE SEQUENCE [LARGE SCALE GENOMIC DNA]</scope>
    <source>
        <strain>PCC 7120 / SAG 25.82 / UTEX 2576</strain>
    </source>
</reference>
<feature type="chain" id="PRO_0000312531" description="LL-diaminopimelate aminotransferase 1">
    <location>
        <begin position="1"/>
        <end position="411"/>
    </location>
</feature>
<feature type="binding site" evidence="1">
    <location>
        <position position="15"/>
    </location>
    <ligand>
        <name>substrate</name>
    </ligand>
</feature>
<feature type="binding site" evidence="1">
    <location>
        <position position="42"/>
    </location>
    <ligand>
        <name>substrate</name>
    </ligand>
</feature>
<feature type="binding site" evidence="1">
    <location>
        <position position="72"/>
    </location>
    <ligand>
        <name>pyridoxal 5'-phosphate</name>
        <dbReference type="ChEBI" id="CHEBI:597326"/>
    </ligand>
</feature>
<feature type="binding site" evidence="1">
    <location>
        <begin position="108"/>
        <end position="109"/>
    </location>
    <ligand>
        <name>pyridoxal 5'-phosphate</name>
        <dbReference type="ChEBI" id="CHEBI:597326"/>
    </ligand>
</feature>
<feature type="binding site" evidence="1">
    <location>
        <position position="109"/>
    </location>
    <ligand>
        <name>substrate</name>
    </ligand>
</feature>
<feature type="binding site" evidence="1">
    <location>
        <position position="132"/>
    </location>
    <ligand>
        <name>pyridoxal 5'-phosphate</name>
        <dbReference type="ChEBI" id="CHEBI:597326"/>
    </ligand>
</feature>
<feature type="binding site" evidence="1">
    <location>
        <position position="132"/>
    </location>
    <ligand>
        <name>substrate</name>
    </ligand>
</feature>
<feature type="binding site" evidence="1">
    <location>
        <position position="187"/>
    </location>
    <ligand>
        <name>pyridoxal 5'-phosphate</name>
        <dbReference type="ChEBI" id="CHEBI:597326"/>
    </ligand>
</feature>
<feature type="binding site" evidence="1">
    <location>
        <position position="187"/>
    </location>
    <ligand>
        <name>substrate</name>
    </ligand>
</feature>
<feature type="binding site" evidence="1">
    <location>
        <position position="218"/>
    </location>
    <ligand>
        <name>pyridoxal 5'-phosphate</name>
        <dbReference type="ChEBI" id="CHEBI:597326"/>
    </ligand>
</feature>
<feature type="binding site" evidence="1">
    <location>
        <begin position="246"/>
        <end position="248"/>
    </location>
    <ligand>
        <name>pyridoxal 5'-phosphate</name>
        <dbReference type="ChEBI" id="CHEBI:597326"/>
    </ligand>
</feature>
<feature type="binding site" evidence="1">
    <location>
        <position position="257"/>
    </location>
    <ligand>
        <name>pyridoxal 5'-phosphate</name>
        <dbReference type="ChEBI" id="CHEBI:597326"/>
    </ligand>
</feature>
<feature type="binding site" evidence="1">
    <location>
        <position position="292"/>
    </location>
    <ligand>
        <name>pyridoxal 5'-phosphate</name>
        <dbReference type="ChEBI" id="CHEBI:597326"/>
    </ligand>
</feature>
<feature type="binding site" evidence="1">
    <location>
        <position position="292"/>
    </location>
    <ligand>
        <name>substrate</name>
    </ligand>
</feature>
<feature type="binding site" evidence="1">
    <location>
        <position position="388"/>
    </location>
    <ligand>
        <name>substrate</name>
    </ligand>
</feature>
<feature type="modified residue" description="N6-(pyridoxal phosphate)lysine" evidence="1">
    <location>
        <position position="249"/>
    </location>
</feature>
<gene>
    <name evidence="1" type="primary">dapL1</name>
    <name type="ordered locus">alr5103</name>
</gene>
<protein>
    <recommendedName>
        <fullName evidence="1">LL-diaminopimelate aminotransferase 1</fullName>
        <shortName evidence="1">DAP-AT 1</shortName>
        <shortName evidence="1">DAP-aminotransferase 1</shortName>
        <shortName evidence="1">LL-DAP-aminotransferase 1</shortName>
        <ecNumber evidence="1">2.6.1.83</ecNumber>
    </recommendedName>
</protein>
<dbReference type="EC" id="2.6.1.83" evidence="1"/>
<dbReference type="EMBL" id="BA000019">
    <property type="protein sequence ID" value="BAB76802.1"/>
    <property type="molecule type" value="Genomic_DNA"/>
</dbReference>
<dbReference type="PIR" id="AG2443">
    <property type="entry name" value="AG2443"/>
</dbReference>
<dbReference type="RefSeq" id="WP_010999229.1">
    <property type="nucleotide sequence ID" value="NZ_RSCN01000014.1"/>
</dbReference>
<dbReference type="SMR" id="Q8YM38"/>
<dbReference type="STRING" id="103690.gene:10497162"/>
<dbReference type="KEGG" id="ana:alr5103"/>
<dbReference type="eggNOG" id="COG0436">
    <property type="taxonomic scope" value="Bacteria"/>
</dbReference>
<dbReference type="OrthoDB" id="9802328at2"/>
<dbReference type="UniPathway" id="UPA00034">
    <property type="reaction ID" value="UER00466"/>
</dbReference>
<dbReference type="Proteomes" id="UP000002483">
    <property type="component" value="Chromosome"/>
</dbReference>
<dbReference type="GO" id="GO:0010285">
    <property type="term" value="F:L,L-diaminopimelate aminotransferase activity"/>
    <property type="evidence" value="ECO:0007669"/>
    <property type="project" value="UniProtKB-UniRule"/>
</dbReference>
<dbReference type="GO" id="GO:0030170">
    <property type="term" value="F:pyridoxal phosphate binding"/>
    <property type="evidence" value="ECO:0007669"/>
    <property type="project" value="UniProtKB-UniRule"/>
</dbReference>
<dbReference type="GO" id="GO:0033362">
    <property type="term" value="P:lysine biosynthetic process via diaminopimelate, diaminopimelate-aminotransferase pathway"/>
    <property type="evidence" value="ECO:0007669"/>
    <property type="project" value="UniProtKB-UniRule"/>
</dbReference>
<dbReference type="CDD" id="cd00609">
    <property type="entry name" value="AAT_like"/>
    <property type="match status" value="1"/>
</dbReference>
<dbReference type="FunFam" id="3.40.640.10:FF:000099">
    <property type="entry name" value="LL-diaminopimelate aminotransferase, chloroplastic"/>
    <property type="match status" value="1"/>
</dbReference>
<dbReference type="Gene3D" id="3.90.1150.10">
    <property type="entry name" value="Aspartate Aminotransferase, domain 1"/>
    <property type="match status" value="1"/>
</dbReference>
<dbReference type="Gene3D" id="3.40.640.10">
    <property type="entry name" value="Type I PLP-dependent aspartate aminotransferase-like (Major domain)"/>
    <property type="match status" value="1"/>
</dbReference>
<dbReference type="HAMAP" id="MF_01642">
    <property type="entry name" value="DapL_aminotrans_1"/>
    <property type="match status" value="1"/>
</dbReference>
<dbReference type="InterPro" id="IPR004839">
    <property type="entry name" value="Aminotransferase_I/II_large"/>
</dbReference>
<dbReference type="InterPro" id="IPR019942">
    <property type="entry name" value="DapL/ALD1"/>
</dbReference>
<dbReference type="InterPro" id="IPR015424">
    <property type="entry name" value="PyrdxlP-dep_Trfase"/>
</dbReference>
<dbReference type="InterPro" id="IPR015421">
    <property type="entry name" value="PyrdxlP-dep_Trfase_major"/>
</dbReference>
<dbReference type="InterPro" id="IPR015422">
    <property type="entry name" value="PyrdxlP-dep_Trfase_small"/>
</dbReference>
<dbReference type="NCBIfam" id="TIGR03542">
    <property type="entry name" value="DAPAT_plant"/>
    <property type="match status" value="1"/>
</dbReference>
<dbReference type="PANTHER" id="PTHR43144">
    <property type="entry name" value="AMINOTRANSFERASE"/>
    <property type="match status" value="1"/>
</dbReference>
<dbReference type="Pfam" id="PF00155">
    <property type="entry name" value="Aminotran_1_2"/>
    <property type="match status" value="1"/>
</dbReference>
<dbReference type="SUPFAM" id="SSF53383">
    <property type="entry name" value="PLP-dependent transferases"/>
    <property type="match status" value="1"/>
</dbReference>
<proteinExistence type="inferred from homology"/>